<evidence type="ECO:0000255" key="1">
    <source>
        <dbReference type="HAMAP-Rule" id="MF_01898"/>
    </source>
</evidence>
<reference key="1">
    <citation type="journal article" date="2005" name="J. Bacteriol.">
        <title>Insights on evolution of virulence and resistance from the complete genome analysis of an early methicillin-resistant Staphylococcus aureus strain and a biofilm-producing methicillin-resistant Staphylococcus epidermidis strain.</title>
        <authorList>
            <person name="Gill S.R."/>
            <person name="Fouts D.E."/>
            <person name="Archer G.L."/>
            <person name="Mongodin E.F."/>
            <person name="DeBoy R.T."/>
            <person name="Ravel J."/>
            <person name="Paulsen I.T."/>
            <person name="Kolonay J.F."/>
            <person name="Brinkac L.M."/>
            <person name="Beanan M.J."/>
            <person name="Dodson R.J."/>
            <person name="Daugherty S.C."/>
            <person name="Madupu R."/>
            <person name="Angiuoli S.V."/>
            <person name="Durkin A.S."/>
            <person name="Haft D.H."/>
            <person name="Vamathevan J.J."/>
            <person name="Khouri H."/>
            <person name="Utterback T.R."/>
            <person name="Lee C."/>
            <person name="Dimitrov G."/>
            <person name="Jiang L."/>
            <person name="Qin H."/>
            <person name="Weidman J."/>
            <person name="Tran K."/>
            <person name="Kang K.H."/>
            <person name="Hance I.R."/>
            <person name="Nelson K.E."/>
            <person name="Fraser C.M."/>
        </authorList>
    </citation>
    <scope>NUCLEOTIDE SEQUENCE [LARGE SCALE GENOMIC DNA]</scope>
    <source>
        <strain>ATCC 35984 / DSM 28319 / BCRC 17069 / CCUG 31568 / BM 3577 / RP62A</strain>
    </source>
</reference>
<accession>Q5HK03</accession>
<keyword id="KW-0067">ATP-binding</keyword>
<keyword id="KW-0963">Cytoplasm</keyword>
<keyword id="KW-0238">DNA-binding</keyword>
<keyword id="KW-0413">Isomerase</keyword>
<keyword id="KW-0460">Magnesium</keyword>
<keyword id="KW-0479">Metal-binding</keyword>
<keyword id="KW-0547">Nucleotide-binding</keyword>
<keyword id="KW-1185">Reference proteome</keyword>
<keyword id="KW-0799">Topoisomerase</keyword>
<feature type="chain" id="PRO_0000145345" description="DNA gyrase subunit B">
    <location>
        <begin position="1"/>
        <end position="643"/>
    </location>
</feature>
<feature type="domain" description="Toprim" evidence="1">
    <location>
        <begin position="428"/>
        <end position="542"/>
    </location>
</feature>
<feature type="binding site" evidence="1">
    <location>
        <position position="434"/>
    </location>
    <ligand>
        <name>Mg(2+)</name>
        <dbReference type="ChEBI" id="CHEBI:18420"/>
        <label>1</label>
        <note>catalytic</note>
    </ligand>
</feature>
<feature type="binding site" evidence="1">
    <location>
        <position position="507"/>
    </location>
    <ligand>
        <name>Mg(2+)</name>
        <dbReference type="ChEBI" id="CHEBI:18420"/>
        <label>1</label>
        <note>catalytic</note>
    </ligand>
</feature>
<feature type="binding site" evidence="1">
    <location>
        <position position="507"/>
    </location>
    <ligand>
        <name>Mg(2+)</name>
        <dbReference type="ChEBI" id="CHEBI:18420"/>
        <label>2</label>
    </ligand>
</feature>
<feature type="binding site" evidence="1">
    <location>
        <position position="509"/>
    </location>
    <ligand>
        <name>Mg(2+)</name>
        <dbReference type="ChEBI" id="CHEBI:18420"/>
        <label>2</label>
    </ligand>
</feature>
<feature type="site" description="Interaction with DNA" evidence="1">
    <location>
        <position position="459"/>
    </location>
</feature>
<feature type="site" description="Interaction with DNA" evidence="1">
    <location>
        <position position="462"/>
    </location>
</feature>
<organism>
    <name type="scientific">Staphylococcus epidermidis (strain ATCC 35984 / DSM 28319 / BCRC 17069 / CCUG 31568 / BM 3577 / RP62A)</name>
    <dbReference type="NCBI Taxonomy" id="176279"/>
    <lineage>
        <taxon>Bacteria</taxon>
        <taxon>Bacillati</taxon>
        <taxon>Bacillota</taxon>
        <taxon>Bacilli</taxon>
        <taxon>Bacillales</taxon>
        <taxon>Staphylococcaceae</taxon>
        <taxon>Staphylococcus</taxon>
    </lineage>
</organism>
<comment type="function">
    <text evidence="1">A type II topoisomerase that negatively supercoils closed circular double-stranded (ds) DNA in an ATP-dependent manner to modulate DNA topology and maintain chromosomes in an underwound state. Negative supercoiling favors strand separation, and DNA replication, transcription, recombination and repair, all of which involve strand separation. Also able to catalyze the interconversion of other topological isomers of dsDNA rings, including catenanes and knotted rings. Type II topoisomerases break and join 2 DNA strands simultaneously in an ATP-dependent manner.</text>
</comment>
<comment type="catalytic activity">
    <reaction evidence="1">
        <text>ATP-dependent breakage, passage and rejoining of double-stranded DNA.</text>
        <dbReference type="EC" id="5.6.2.2"/>
    </reaction>
</comment>
<comment type="cofactor">
    <cofactor evidence="1">
        <name>Mg(2+)</name>
        <dbReference type="ChEBI" id="CHEBI:18420"/>
    </cofactor>
    <cofactor evidence="1">
        <name>Mn(2+)</name>
        <dbReference type="ChEBI" id="CHEBI:29035"/>
    </cofactor>
    <cofactor evidence="1">
        <name>Ca(2+)</name>
        <dbReference type="ChEBI" id="CHEBI:29108"/>
    </cofactor>
    <text evidence="1">Binds two Mg(2+) per subunit. The magnesium ions form salt bridges with both the protein and the DNA. Can also accept other divalent metal cations, such as Mn(2+) or Ca(2+).</text>
</comment>
<comment type="subunit">
    <text evidence="1">Heterotetramer, composed of two GyrA and two GyrB chains. In the heterotetramer, GyrA contains the active site tyrosine that forms a transient covalent intermediate with DNA, while GyrB binds cofactors and catalyzes ATP hydrolysis.</text>
</comment>
<comment type="subcellular location">
    <subcellularLocation>
        <location evidence="1">Cytoplasm</location>
    </subcellularLocation>
</comment>
<comment type="miscellaneous">
    <text evidence="1">Few gyrases are as efficient as E.coli at forming negative supercoils. Not all organisms have 2 type II topoisomerases; in organisms with a single type II topoisomerase this enzyme also has to decatenate newly replicated chromosomes.</text>
</comment>
<comment type="similarity">
    <text evidence="1">Belongs to the type II topoisomerase GyrB family.</text>
</comment>
<dbReference type="EC" id="5.6.2.2" evidence="1"/>
<dbReference type="EMBL" id="CP000029">
    <property type="protein sequence ID" value="AAW53373.1"/>
    <property type="molecule type" value="Genomic_DNA"/>
</dbReference>
<dbReference type="RefSeq" id="WP_001831817.1">
    <property type="nucleotide sequence ID" value="NC_002976.3"/>
</dbReference>
<dbReference type="SMR" id="Q5HK03"/>
<dbReference type="STRING" id="176279.SERP2549"/>
<dbReference type="ChEMBL" id="CHEMBL2331040"/>
<dbReference type="DrugCentral" id="Q5HK03"/>
<dbReference type="GeneID" id="50017419"/>
<dbReference type="KEGG" id="ser:SERP2549"/>
<dbReference type="eggNOG" id="COG0187">
    <property type="taxonomic scope" value="Bacteria"/>
</dbReference>
<dbReference type="HOGENOM" id="CLU_006146_1_2_9"/>
<dbReference type="PRO" id="PR:Q5HK03"/>
<dbReference type="Proteomes" id="UP000000531">
    <property type="component" value="Chromosome"/>
</dbReference>
<dbReference type="GO" id="GO:0005694">
    <property type="term" value="C:chromosome"/>
    <property type="evidence" value="ECO:0007669"/>
    <property type="project" value="InterPro"/>
</dbReference>
<dbReference type="GO" id="GO:0005737">
    <property type="term" value="C:cytoplasm"/>
    <property type="evidence" value="ECO:0007669"/>
    <property type="project" value="UniProtKB-SubCell"/>
</dbReference>
<dbReference type="GO" id="GO:0005524">
    <property type="term" value="F:ATP binding"/>
    <property type="evidence" value="ECO:0007669"/>
    <property type="project" value="UniProtKB-UniRule"/>
</dbReference>
<dbReference type="GO" id="GO:0003677">
    <property type="term" value="F:DNA binding"/>
    <property type="evidence" value="ECO:0007669"/>
    <property type="project" value="UniProtKB-KW"/>
</dbReference>
<dbReference type="GO" id="GO:0034335">
    <property type="term" value="F:DNA negative supercoiling activity"/>
    <property type="evidence" value="ECO:0007669"/>
    <property type="project" value="UniProtKB-ARBA"/>
</dbReference>
<dbReference type="GO" id="GO:0046872">
    <property type="term" value="F:metal ion binding"/>
    <property type="evidence" value="ECO:0007669"/>
    <property type="project" value="UniProtKB-KW"/>
</dbReference>
<dbReference type="GO" id="GO:0006265">
    <property type="term" value="P:DNA topological change"/>
    <property type="evidence" value="ECO:0007669"/>
    <property type="project" value="UniProtKB-UniRule"/>
</dbReference>
<dbReference type="GO" id="GO:0006261">
    <property type="term" value="P:DNA-templated DNA replication"/>
    <property type="evidence" value="ECO:0007669"/>
    <property type="project" value="UniProtKB-UniRule"/>
</dbReference>
<dbReference type="CDD" id="cd16928">
    <property type="entry name" value="HATPase_GyrB-like"/>
    <property type="match status" value="1"/>
</dbReference>
<dbReference type="CDD" id="cd00822">
    <property type="entry name" value="TopoII_Trans_DNA_gyrase"/>
    <property type="match status" value="1"/>
</dbReference>
<dbReference type="CDD" id="cd03366">
    <property type="entry name" value="TOPRIM_TopoIIA_GyrB"/>
    <property type="match status" value="1"/>
</dbReference>
<dbReference type="FunFam" id="3.30.230.10:FF:000005">
    <property type="entry name" value="DNA gyrase subunit B"/>
    <property type="match status" value="1"/>
</dbReference>
<dbReference type="FunFam" id="3.30.565.10:FF:000002">
    <property type="entry name" value="DNA gyrase subunit B"/>
    <property type="match status" value="1"/>
</dbReference>
<dbReference type="FunFam" id="3.40.50.670:FF:000002">
    <property type="entry name" value="DNA gyrase subunit B"/>
    <property type="match status" value="1"/>
</dbReference>
<dbReference type="Gene3D" id="3.30.230.10">
    <property type="match status" value="1"/>
</dbReference>
<dbReference type="Gene3D" id="3.40.50.670">
    <property type="match status" value="1"/>
</dbReference>
<dbReference type="Gene3D" id="3.30.565.10">
    <property type="entry name" value="Histidine kinase-like ATPase, C-terminal domain"/>
    <property type="match status" value="1"/>
</dbReference>
<dbReference type="HAMAP" id="MF_01898">
    <property type="entry name" value="GyrB"/>
    <property type="match status" value="1"/>
</dbReference>
<dbReference type="InterPro" id="IPR002288">
    <property type="entry name" value="DNA_gyrase_B_C"/>
</dbReference>
<dbReference type="InterPro" id="IPR011557">
    <property type="entry name" value="GyrB"/>
</dbReference>
<dbReference type="InterPro" id="IPR036890">
    <property type="entry name" value="HATPase_C_sf"/>
</dbReference>
<dbReference type="InterPro" id="IPR020568">
    <property type="entry name" value="Ribosomal_Su5_D2-typ_SF"/>
</dbReference>
<dbReference type="InterPro" id="IPR014721">
    <property type="entry name" value="Ribsml_uS5_D2-typ_fold_subgr"/>
</dbReference>
<dbReference type="InterPro" id="IPR001241">
    <property type="entry name" value="Topo_IIA"/>
</dbReference>
<dbReference type="InterPro" id="IPR013760">
    <property type="entry name" value="Topo_IIA-like_dom_sf"/>
</dbReference>
<dbReference type="InterPro" id="IPR000565">
    <property type="entry name" value="Topo_IIA_B"/>
</dbReference>
<dbReference type="InterPro" id="IPR013759">
    <property type="entry name" value="Topo_IIA_B_C"/>
</dbReference>
<dbReference type="InterPro" id="IPR013506">
    <property type="entry name" value="Topo_IIA_bsu_dom2"/>
</dbReference>
<dbReference type="InterPro" id="IPR018522">
    <property type="entry name" value="TopoIIA_CS"/>
</dbReference>
<dbReference type="InterPro" id="IPR006171">
    <property type="entry name" value="TOPRIM_dom"/>
</dbReference>
<dbReference type="InterPro" id="IPR034160">
    <property type="entry name" value="TOPRIM_GyrB"/>
</dbReference>
<dbReference type="NCBIfam" id="TIGR01059">
    <property type="entry name" value="gyrB"/>
    <property type="match status" value="1"/>
</dbReference>
<dbReference type="NCBIfam" id="NF004189">
    <property type="entry name" value="PRK05644.1"/>
    <property type="match status" value="1"/>
</dbReference>
<dbReference type="NCBIfam" id="NF011501">
    <property type="entry name" value="PRK14939.1"/>
    <property type="match status" value="1"/>
</dbReference>
<dbReference type="PANTHER" id="PTHR45866:SF1">
    <property type="entry name" value="DNA GYRASE SUBUNIT B, MITOCHONDRIAL"/>
    <property type="match status" value="1"/>
</dbReference>
<dbReference type="PANTHER" id="PTHR45866">
    <property type="entry name" value="DNA GYRASE/TOPOISOMERASE SUBUNIT B"/>
    <property type="match status" value="1"/>
</dbReference>
<dbReference type="Pfam" id="PF00204">
    <property type="entry name" value="DNA_gyraseB"/>
    <property type="match status" value="1"/>
</dbReference>
<dbReference type="Pfam" id="PF00986">
    <property type="entry name" value="DNA_gyraseB_C"/>
    <property type="match status" value="1"/>
</dbReference>
<dbReference type="Pfam" id="PF02518">
    <property type="entry name" value="HATPase_c"/>
    <property type="match status" value="1"/>
</dbReference>
<dbReference type="Pfam" id="PF01751">
    <property type="entry name" value="Toprim"/>
    <property type="match status" value="1"/>
</dbReference>
<dbReference type="PRINTS" id="PR01159">
    <property type="entry name" value="DNAGYRASEB"/>
</dbReference>
<dbReference type="PRINTS" id="PR00418">
    <property type="entry name" value="TPI2FAMILY"/>
</dbReference>
<dbReference type="SMART" id="SM00387">
    <property type="entry name" value="HATPase_c"/>
    <property type="match status" value="1"/>
</dbReference>
<dbReference type="SMART" id="SM00433">
    <property type="entry name" value="TOP2c"/>
    <property type="match status" value="1"/>
</dbReference>
<dbReference type="SUPFAM" id="SSF55874">
    <property type="entry name" value="ATPase domain of HSP90 chaperone/DNA topoisomerase II/histidine kinase"/>
    <property type="match status" value="1"/>
</dbReference>
<dbReference type="SUPFAM" id="SSF54211">
    <property type="entry name" value="Ribosomal protein S5 domain 2-like"/>
    <property type="match status" value="1"/>
</dbReference>
<dbReference type="SUPFAM" id="SSF56719">
    <property type="entry name" value="Type II DNA topoisomerase"/>
    <property type="match status" value="1"/>
</dbReference>
<dbReference type="PROSITE" id="PS00177">
    <property type="entry name" value="TOPOISOMERASE_II"/>
    <property type="match status" value="1"/>
</dbReference>
<dbReference type="PROSITE" id="PS50880">
    <property type="entry name" value="TOPRIM"/>
    <property type="match status" value="1"/>
</dbReference>
<gene>
    <name evidence="1" type="primary">gyrB</name>
    <name type="ordered locus">SERP2549</name>
</gene>
<sequence length="643" mass="72504">MVNTLSDVNNTDNYGAGQIQVLEGLEAVRKRPGMYIGSTSERGLHHLVWEIVDNSIDEALAGYASHIEVVIEKDNWIKVTDNGRGIPVDIQEKMGRPAVEVILTVLHAGGKFGGGGYKVSGGLHGVGSSVVNALSQDLEVYVHRNGTIYHQAYKQGVPQFDLKEIGDTDKTGTAIRFKADKEIFTETTVYNYETLQKRIRELAFLNKGIQITLKDEREEEVREDSYHYEGGIKSYVDLLNENKEPLHDEPIYIHQSKDDIEVEIALQYNSGYATNLLTYANNIHTYEGGTHEDGFKRALTRVLNSYGTQSKIIKEDKDRLSGEDTREGLTAVVSIKHGDPQFEGQTKTKLGNSEVRQVVDRLFSEHFERFLYENPSVGRIIVEKGIMASRARVAAKKAREVTRRKSALDVSSLPGKLADCSSKNPEESEIFLVEGDSAGGSTKSGRDSRTQAILPLRGKILNVEKARLDRILNNNEIRQMITAFGTGIGGEFDISKARYHKIVIMTDADVDGAHIRTLLLTFFYRFMRPLIEAGYVYIAQPPLYKLTQGKQKYYVFNDRELDKLKQELNPSPKWSIARYKGLGEMNADQLWETTMNPEHRSMLQVRLEDAIDADQTFEMLMGDVVENRRQFIEDNAVYANLDF</sequence>
<protein>
    <recommendedName>
        <fullName evidence="1">DNA gyrase subunit B</fullName>
        <ecNumber evidence="1">5.6.2.2</ecNumber>
    </recommendedName>
</protein>
<name>GYRB_STAEQ</name>
<proteinExistence type="inferred from homology"/>